<keyword id="KW-0007">Acetylation</keyword>
<keyword id="KW-0963">Cytoplasm</keyword>
<keyword id="KW-0539">Nucleus</keyword>
<keyword id="KW-0597">Phosphoprotein</keyword>
<keyword id="KW-1185">Reference proteome</keyword>
<keyword id="KW-0677">Repeat</keyword>
<keyword id="KW-0853">WD repeat</keyword>
<evidence type="ECO:0000250" key="1">
    <source>
        <dbReference type="UniProtKB" id="Q8TBZ3"/>
    </source>
</evidence>
<evidence type="ECO:0000256" key="2">
    <source>
        <dbReference type="SAM" id="MobiDB-lite"/>
    </source>
</evidence>
<evidence type="ECO:0000305" key="3"/>
<comment type="function">
    <text evidence="1">Regulator of deubiquitinating complexes. Activates deubiquitinating activity of complexes containing USP12. Anchors at the base of the ubiquitin-contacting loop of USP12 and remotely modulates the catalytic center of the enzyme. Regulates shuttling of complexes containing USP12 between the plasma membrane, cytoplasm and nucleus.</text>
</comment>
<comment type="subunit">
    <text evidence="1">Interacts with USP12; promotes translocation of USP12/WDR20 to the plasma membrane. Component of the USP12/WDR20/WDR48 deubiquitinating complex. Interacts with USP46; contributes to the cytoplasmic localization of the USP46/WDR20 complex. Component of the USP12/DMWD/WDR48 deubiquitinating complex.</text>
</comment>
<comment type="subcellular location">
    <subcellularLocation>
        <location evidence="1">Cytoplasm</location>
    </subcellularLocation>
    <subcellularLocation>
        <location evidence="1">Nucleus</location>
    </subcellularLocation>
</comment>
<reference key="1">
    <citation type="journal article" date="2005" name="Science">
        <title>The transcriptional landscape of the mammalian genome.</title>
        <authorList>
            <person name="Carninci P."/>
            <person name="Kasukawa T."/>
            <person name="Katayama S."/>
            <person name="Gough J."/>
            <person name="Frith M.C."/>
            <person name="Maeda N."/>
            <person name="Oyama R."/>
            <person name="Ravasi T."/>
            <person name="Lenhard B."/>
            <person name="Wells C."/>
            <person name="Kodzius R."/>
            <person name="Shimokawa K."/>
            <person name="Bajic V.B."/>
            <person name="Brenner S.E."/>
            <person name="Batalov S."/>
            <person name="Forrest A.R."/>
            <person name="Zavolan M."/>
            <person name="Davis M.J."/>
            <person name="Wilming L.G."/>
            <person name="Aidinis V."/>
            <person name="Allen J.E."/>
            <person name="Ambesi-Impiombato A."/>
            <person name="Apweiler R."/>
            <person name="Aturaliya R.N."/>
            <person name="Bailey T.L."/>
            <person name="Bansal M."/>
            <person name="Baxter L."/>
            <person name="Beisel K.W."/>
            <person name="Bersano T."/>
            <person name="Bono H."/>
            <person name="Chalk A.M."/>
            <person name="Chiu K.P."/>
            <person name="Choudhary V."/>
            <person name="Christoffels A."/>
            <person name="Clutterbuck D.R."/>
            <person name="Crowe M.L."/>
            <person name="Dalla E."/>
            <person name="Dalrymple B.P."/>
            <person name="de Bono B."/>
            <person name="Della Gatta G."/>
            <person name="di Bernardo D."/>
            <person name="Down T."/>
            <person name="Engstrom P."/>
            <person name="Fagiolini M."/>
            <person name="Faulkner G."/>
            <person name="Fletcher C.F."/>
            <person name="Fukushima T."/>
            <person name="Furuno M."/>
            <person name="Futaki S."/>
            <person name="Gariboldi M."/>
            <person name="Georgii-Hemming P."/>
            <person name="Gingeras T.R."/>
            <person name="Gojobori T."/>
            <person name="Green R.E."/>
            <person name="Gustincich S."/>
            <person name="Harbers M."/>
            <person name="Hayashi Y."/>
            <person name="Hensch T.K."/>
            <person name="Hirokawa N."/>
            <person name="Hill D."/>
            <person name="Huminiecki L."/>
            <person name="Iacono M."/>
            <person name="Ikeo K."/>
            <person name="Iwama A."/>
            <person name="Ishikawa T."/>
            <person name="Jakt M."/>
            <person name="Kanapin A."/>
            <person name="Katoh M."/>
            <person name="Kawasawa Y."/>
            <person name="Kelso J."/>
            <person name="Kitamura H."/>
            <person name="Kitano H."/>
            <person name="Kollias G."/>
            <person name="Krishnan S.P."/>
            <person name="Kruger A."/>
            <person name="Kummerfeld S.K."/>
            <person name="Kurochkin I.V."/>
            <person name="Lareau L.F."/>
            <person name="Lazarevic D."/>
            <person name="Lipovich L."/>
            <person name="Liu J."/>
            <person name="Liuni S."/>
            <person name="McWilliam S."/>
            <person name="Madan Babu M."/>
            <person name="Madera M."/>
            <person name="Marchionni L."/>
            <person name="Matsuda H."/>
            <person name="Matsuzawa S."/>
            <person name="Miki H."/>
            <person name="Mignone F."/>
            <person name="Miyake S."/>
            <person name="Morris K."/>
            <person name="Mottagui-Tabar S."/>
            <person name="Mulder N."/>
            <person name="Nakano N."/>
            <person name="Nakauchi H."/>
            <person name="Ng P."/>
            <person name="Nilsson R."/>
            <person name="Nishiguchi S."/>
            <person name="Nishikawa S."/>
            <person name="Nori F."/>
            <person name="Ohara O."/>
            <person name="Okazaki Y."/>
            <person name="Orlando V."/>
            <person name="Pang K.C."/>
            <person name="Pavan W.J."/>
            <person name="Pavesi G."/>
            <person name="Pesole G."/>
            <person name="Petrovsky N."/>
            <person name="Piazza S."/>
            <person name="Reed J."/>
            <person name="Reid J.F."/>
            <person name="Ring B.Z."/>
            <person name="Ringwald M."/>
            <person name="Rost B."/>
            <person name="Ruan Y."/>
            <person name="Salzberg S.L."/>
            <person name="Sandelin A."/>
            <person name="Schneider C."/>
            <person name="Schoenbach C."/>
            <person name="Sekiguchi K."/>
            <person name="Semple C.A."/>
            <person name="Seno S."/>
            <person name="Sessa L."/>
            <person name="Sheng Y."/>
            <person name="Shibata Y."/>
            <person name="Shimada H."/>
            <person name="Shimada K."/>
            <person name="Silva D."/>
            <person name="Sinclair B."/>
            <person name="Sperling S."/>
            <person name="Stupka E."/>
            <person name="Sugiura K."/>
            <person name="Sultana R."/>
            <person name="Takenaka Y."/>
            <person name="Taki K."/>
            <person name="Tammoja K."/>
            <person name="Tan S.L."/>
            <person name="Tang S."/>
            <person name="Taylor M.S."/>
            <person name="Tegner J."/>
            <person name="Teichmann S.A."/>
            <person name="Ueda H.R."/>
            <person name="van Nimwegen E."/>
            <person name="Verardo R."/>
            <person name="Wei C.L."/>
            <person name="Yagi K."/>
            <person name="Yamanishi H."/>
            <person name="Zabarovsky E."/>
            <person name="Zhu S."/>
            <person name="Zimmer A."/>
            <person name="Hide W."/>
            <person name="Bult C."/>
            <person name="Grimmond S.M."/>
            <person name="Teasdale R.D."/>
            <person name="Liu E.T."/>
            <person name="Brusic V."/>
            <person name="Quackenbush J."/>
            <person name="Wahlestedt C."/>
            <person name="Mattick J.S."/>
            <person name="Hume D.A."/>
            <person name="Kai C."/>
            <person name="Sasaki D."/>
            <person name="Tomaru Y."/>
            <person name="Fukuda S."/>
            <person name="Kanamori-Katayama M."/>
            <person name="Suzuki M."/>
            <person name="Aoki J."/>
            <person name="Arakawa T."/>
            <person name="Iida J."/>
            <person name="Imamura K."/>
            <person name="Itoh M."/>
            <person name="Kato T."/>
            <person name="Kawaji H."/>
            <person name="Kawagashira N."/>
            <person name="Kawashima T."/>
            <person name="Kojima M."/>
            <person name="Kondo S."/>
            <person name="Konno H."/>
            <person name="Nakano K."/>
            <person name="Ninomiya N."/>
            <person name="Nishio T."/>
            <person name="Okada M."/>
            <person name="Plessy C."/>
            <person name="Shibata K."/>
            <person name="Shiraki T."/>
            <person name="Suzuki S."/>
            <person name="Tagami M."/>
            <person name="Waki K."/>
            <person name="Watahiki A."/>
            <person name="Okamura-Oho Y."/>
            <person name="Suzuki H."/>
            <person name="Kawai J."/>
            <person name="Hayashizaki Y."/>
        </authorList>
    </citation>
    <scope>NUCLEOTIDE SEQUENCE [LARGE SCALE MRNA]</scope>
    <source>
        <strain>C57BL/6J</strain>
        <tissue>Testis</tissue>
    </source>
</reference>
<reference key="2">
    <citation type="journal article" date="2004" name="Genome Res.">
        <title>The status, quality, and expansion of the NIH full-length cDNA project: the Mammalian Gene Collection (MGC).</title>
        <authorList>
            <consortium name="The MGC Project Team"/>
        </authorList>
    </citation>
    <scope>NUCLEOTIDE SEQUENCE [LARGE SCALE MRNA]</scope>
    <source>
        <tissue>Testis</tissue>
    </source>
</reference>
<name>WDR20_MOUSE</name>
<dbReference type="EMBL" id="AK015014">
    <property type="protein sequence ID" value="BAB29671.1"/>
    <property type="molecule type" value="mRNA"/>
</dbReference>
<dbReference type="EMBL" id="AK015210">
    <property type="protein sequence ID" value="BAB29747.2"/>
    <property type="molecule type" value="mRNA"/>
</dbReference>
<dbReference type="EMBL" id="BC050778">
    <property type="protein sequence ID" value="AAH50778.1"/>
    <property type="molecule type" value="mRNA"/>
</dbReference>
<dbReference type="CCDS" id="CCDS25943.1"/>
<dbReference type="RefSeq" id="NP_081890.1">
    <property type="nucleotide sequence ID" value="NM_027614.1"/>
</dbReference>
<dbReference type="SMR" id="Q9D5R2"/>
<dbReference type="BioGRID" id="214364">
    <property type="interactions" value="7"/>
</dbReference>
<dbReference type="FunCoup" id="Q9D5R2">
    <property type="interactions" value="17"/>
</dbReference>
<dbReference type="STRING" id="10090.ENSMUSP00000036682"/>
<dbReference type="GlyGen" id="Q9D5R2">
    <property type="glycosylation" value="2 sites, 2 N-linked glycans (2 sites)"/>
</dbReference>
<dbReference type="iPTMnet" id="Q9D5R2"/>
<dbReference type="PhosphoSitePlus" id="Q9D5R2"/>
<dbReference type="jPOST" id="Q9D5R2"/>
<dbReference type="PaxDb" id="10090-ENSMUSP00000036682"/>
<dbReference type="PeptideAtlas" id="Q9D5R2"/>
<dbReference type="ProteomicsDB" id="299969"/>
<dbReference type="Pumba" id="Q9D5R2"/>
<dbReference type="DNASU" id="70948"/>
<dbReference type="Ensembl" id="ENSMUST00000046331.5">
    <property type="protein sequence ID" value="ENSMUSP00000036682.5"/>
    <property type="gene ID" value="ENSMUSG00000035560.6"/>
</dbReference>
<dbReference type="GeneID" id="70948"/>
<dbReference type="KEGG" id="mmu:70948"/>
<dbReference type="UCSC" id="uc007nrk.1">
    <property type="organism name" value="mouse"/>
</dbReference>
<dbReference type="AGR" id="MGI:1918198"/>
<dbReference type="CTD" id="70948"/>
<dbReference type="MGI" id="MGI:1918198">
    <property type="gene designation" value="Wdr20rt"/>
</dbReference>
<dbReference type="VEuPathDB" id="HostDB:ENSMUSG00000035560"/>
<dbReference type="eggNOG" id="KOG2394">
    <property type="taxonomic scope" value="Eukaryota"/>
</dbReference>
<dbReference type="GeneTree" id="ENSGT00390000007686"/>
<dbReference type="HOGENOM" id="CLU_005019_2_1_1"/>
<dbReference type="InParanoid" id="Q9D5R2"/>
<dbReference type="OrthoDB" id="3367at2759"/>
<dbReference type="PhylomeDB" id="Q9D5R2"/>
<dbReference type="TreeFam" id="TF314961"/>
<dbReference type="BioGRID-ORCS" id="70948">
    <property type="hits" value="2 hits in 78 CRISPR screens"/>
</dbReference>
<dbReference type="ChiTaRS" id="Wdr20">
    <property type="organism name" value="mouse"/>
</dbReference>
<dbReference type="PRO" id="PR:Q9D5R2"/>
<dbReference type="Proteomes" id="UP000000589">
    <property type="component" value="Chromosome 12"/>
</dbReference>
<dbReference type="RNAct" id="Q9D5R2">
    <property type="molecule type" value="protein"/>
</dbReference>
<dbReference type="Bgee" id="ENSMUSG00000035560">
    <property type="expression patterns" value="Expressed in spermatocyte and 28 other cell types or tissues"/>
</dbReference>
<dbReference type="ExpressionAtlas" id="Q9D5R2">
    <property type="expression patterns" value="baseline and differential"/>
</dbReference>
<dbReference type="GO" id="GO:0005737">
    <property type="term" value="C:cytoplasm"/>
    <property type="evidence" value="ECO:0000250"/>
    <property type="project" value="UniProtKB"/>
</dbReference>
<dbReference type="GO" id="GO:0005634">
    <property type="term" value="C:nucleus"/>
    <property type="evidence" value="ECO:0000250"/>
    <property type="project" value="UniProtKB"/>
</dbReference>
<dbReference type="GO" id="GO:0035800">
    <property type="term" value="F:deubiquitinase activator activity"/>
    <property type="evidence" value="ECO:0000250"/>
    <property type="project" value="UniProtKB"/>
</dbReference>
<dbReference type="FunFam" id="2.130.10.10:FF:000101">
    <property type="entry name" value="WD repeat-containing protein 20 isoform X1"/>
    <property type="match status" value="1"/>
</dbReference>
<dbReference type="Gene3D" id="2.130.10.10">
    <property type="entry name" value="YVTN repeat-like/Quinoprotein amine dehydrogenase"/>
    <property type="match status" value="1"/>
</dbReference>
<dbReference type="InterPro" id="IPR015943">
    <property type="entry name" value="WD40/YVTN_repeat-like_dom_sf"/>
</dbReference>
<dbReference type="InterPro" id="IPR036322">
    <property type="entry name" value="WD40_repeat_dom_sf"/>
</dbReference>
<dbReference type="InterPro" id="IPR001680">
    <property type="entry name" value="WD40_rpt"/>
</dbReference>
<dbReference type="InterPro" id="IPR051362">
    <property type="entry name" value="WD_repeat_creC_regulators"/>
</dbReference>
<dbReference type="PANTHER" id="PTHR14107">
    <property type="entry name" value="WD REPEAT PROTEIN"/>
    <property type="match status" value="1"/>
</dbReference>
<dbReference type="PANTHER" id="PTHR14107:SF5">
    <property type="entry name" value="WD REPEAT-CONTAINING PROTEIN 20"/>
    <property type="match status" value="1"/>
</dbReference>
<dbReference type="Pfam" id="PF00400">
    <property type="entry name" value="WD40"/>
    <property type="match status" value="2"/>
</dbReference>
<dbReference type="SMART" id="SM00320">
    <property type="entry name" value="WD40"/>
    <property type="match status" value="4"/>
</dbReference>
<dbReference type="SUPFAM" id="SSF50978">
    <property type="entry name" value="WD40 repeat-like"/>
    <property type="match status" value="1"/>
</dbReference>
<dbReference type="PROSITE" id="PS50082">
    <property type="entry name" value="WD_REPEATS_2"/>
    <property type="match status" value="1"/>
</dbReference>
<dbReference type="PROSITE" id="PS50294">
    <property type="entry name" value="WD_REPEATS_REGION"/>
    <property type="match status" value="1"/>
</dbReference>
<sequence length="567" mass="62782">MATEGRGKETNEIKTHFTTREGLYRLLPHSEYSRPNRVPFNSQGSNPVRVSFVNLNDQTGNGNRLCFSVGRELYVYIYKGVRKAADLSKPIDKRIYKGTQPTCHDFNHLTATAESVSLLVGFSAGQVQLIDPIKKETSKLFNEERLIDKSRVTCVKWVPGSDSLFLVAHSSGNMYSYNVEHTYGTTAPHYQLLKQGESFAVHNCKSKSTRDLKWTVGEGALNEFAFSPDGKFLACVSQDGFLRVFNFDSAELHGTMKSYFGGLLCLCWSPDGKYIVTGGEDDLVTVWSFLDCRVIARGRGHKSWVSVVAFDPYTTSVEESDPMEFSDSDKNFQDLLHFGRDRANSTQSRLSKQNSTDSRPVSVTYRFGSVGQDTQLCLWDLTEDILFPHQPLSRARAHANVMNATGLPAGSNGSAVTTPGNSVPPPLPRSNSLPHSAVSNAASKGSVMDGAITSGVSKFALLSLHDRKERHHEKDRKRNHSMGHISSKSSDKLNLVNKAKTDPAKTLGTSLCPRMEDVPLLEPLICKKIAHERLTVLVFLEDCIVTACQEGFICTWARPGKVSKFQP</sequence>
<feature type="initiator methionine" description="Removed" evidence="1">
    <location>
        <position position="1"/>
    </location>
</feature>
<feature type="chain" id="PRO_0000051367" description="WD repeat-containing protein 20">
    <location>
        <begin position="2"/>
        <end position="567"/>
    </location>
</feature>
<feature type="repeat" description="WD 1">
    <location>
        <begin position="147"/>
        <end position="187"/>
    </location>
</feature>
<feature type="repeat" description="WD 2">
    <location>
        <begin position="216"/>
        <end position="257"/>
    </location>
</feature>
<feature type="repeat" description="WD 3">
    <location>
        <begin position="258"/>
        <end position="297"/>
    </location>
</feature>
<feature type="repeat" description="WD 4">
    <location>
        <begin position="345"/>
        <end position="389"/>
    </location>
</feature>
<feature type="repeat" description="WD 5">
    <location>
        <begin position="529"/>
        <end position="566"/>
    </location>
</feature>
<feature type="region of interest" description="Disordered" evidence="2">
    <location>
        <begin position="408"/>
        <end position="441"/>
    </location>
</feature>
<feature type="region of interest" description="Disordered" evidence="2">
    <location>
        <begin position="468"/>
        <end position="493"/>
    </location>
</feature>
<feature type="compositionally biased region" description="Polar residues" evidence="2">
    <location>
        <begin position="411"/>
        <end position="421"/>
    </location>
</feature>
<feature type="compositionally biased region" description="Polar residues" evidence="2">
    <location>
        <begin position="429"/>
        <end position="441"/>
    </location>
</feature>
<feature type="compositionally biased region" description="Basic residues" evidence="2">
    <location>
        <begin position="468"/>
        <end position="481"/>
    </location>
</feature>
<feature type="modified residue" description="N-acetylalanine" evidence="1">
    <location>
        <position position="2"/>
    </location>
</feature>
<feature type="modified residue" description="Phosphoserine" evidence="1">
    <location>
        <position position="355"/>
    </location>
</feature>
<feature type="modified residue" description="Phosphoserine" evidence="1">
    <location>
        <position position="358"/>
    </location>
</feature>
<feature type="modified residue" description="Phosphoserine" evidence="1">
    <location>
        <position position="430"/>
    </location>
</feature>
<feature type="modified residue" description="Phosphoserine" evidence="1">
    <location>
        <position position="432"/>
    </location>
</feature>
<feature type="modified residue" description="Phosphoserine" evidence="1">
    <location>
        <position position="463"/>
    </location>
</feature>
<feature type="sequence conflict" description="In Ref. 2; AAH50778." evidence="3" ref="2">
    <original>A</original>
    <variation>V</variation>
    <location>
        <position position="124"/>
    </location>
</feature>
<organism>
    <name type="scientific">Mus musculus</name>
    <name type="common">Mouse</name>
    <dbReference type="NCBI Taxonomy" id="10090"/>
    <lineage>
        <taxon>Eukaryota</taxon>
        <taxon>Metazoa</taxon>
        <taxon>Chordata</taxon>
        <taxon>Craniata</taxon>
        <taxon>Vertebrata</taxon>
        <taxon>Euteleostomi</taxon>
        <taxon>Mammalia</taxon>
        <taxon>Eutheria</taxon>
        <taxon>Euarchontoglires</taxon>
        <taxon>Glires</taxon>
        <taxon>Rodentia</taxon>
        <taxon>Myomorpha</taxon>
        <taxon>Muroidea</taxon>
        <taxon>Muridae</taxon>
        <taxon>Murinae</taxon>
        <taxon>Mus</taxon>
        <taxon>Mus</taxon>
    </lineage>
</organism>
<gene>
    <name type="primary">Wdr20</name>
    <name type="synonym">Wdr20b</name>
    <name type="synonym">Wdr20rt</name>
</gene>
<protein>
    <recommendedName>
        <fullName>WD repeat-containing protein 20</fullName>
    </recommendedName>
</protein>
<accession>Q9D5R2</accession>
<accession>Q80X67</accession>
<accession>Q9D5L0</accession>
<proteinExistence type="evidence at transcript level"/>